<sequence>MLPLWARGGKPIVIPLPQKRHITLPALPILLLLLGTGFLLHSLFFPPPPPHPPGKYTSSPFLVKPSDFLAPPPPDRPSYIPEPLQPKKKGMLVPDAVHYVYGLKPVPEGKTGEELPYYAYLAMRSALINLKPKAIYFHYEHLPTGPWWDLIRPHLTLIKTQVPESIYGRPLKHFAHKADVLRLLAMKYSGGIYLDIDIYVTKPFDDLLYYPTTLGMEASPDSRRSALDPEGLCNAIIISQPNSLFIDRWLASYETFDGGIWAQHSVVKPWQLAREHPTEVQVLSERAFFWPMWHGDEIKKTHETNHHDFKASGQYAYHAWESLAMGYLSKLSPQSIRENENSFNKMVRPFIGPKDDETYKKWKRGH</sequence>
<accession>J9VQC4</accession>
<gene>
    <name evidence="3" type="primary">GOE1</name>
    <name evidence="6" type="ORF">CNAG_02199</name>
</gene>
<keyword id="KW-1003">Cell membrane</keyword>
<keyword id="KW-0961">Cell wall biogenesis/degradation</keyword>
<keyword id="KW-0320">Glycogen biosynthesis</keyword>
<keyword id="KW-0472">Membrane</keyword>
<keyword id="KW-0812">Transmembrane</keyword>
<keyword id="KW-1133">Transmembrane helix</keyword>
<evidence type="ECO:0000255" key="1"/>
<evidence type="ECO:0000269" key="2">
    <source>
    </source>
</evidence>
<evidence type="ECO:0000303" key="3">
    <source>
    </source>
</evidence>
<evidence type="ECO:0000305" key="4"/>
<evidence type="ECO:0000305" key="5">
    <source>
    </source>
</evidence>
<evidence type="ECO:0000312" key="6">
    <source>
        <dbReference type="EMBL" id="AFR95621.2"/>
    </source>
</evidence>
<evidence type="ECO:0000312" key="7">
    <source>
        <dbReference type="Proteomes" id="UP000010091"/>
    </source>
</evidence>
<feature type="chain" id="PRO_0000461104" description="Glucan organizing enzyme 1">
    <location>
        <begin position="1"/>
        <end position="366"/>
    </location>
</feature>
<feature type="topological domain" description="Extracellular" evidence="5">
    <location>
        <begin position="1"/>
        <end position="24"/>
    </location>
</feature>
<feature type="transmembrane region" description="Helical" evidence="1">
    <location>
        <begin position="25"/>
        <end position="45"/>
    </location>
</feature>
<feature type="topological domain" description="Cytoplasmic" evidence="5">
    <location>
        <begin position="46"/>
        <end position="366"/>
    </location>
</feature>
<protein>
    <recommendedName>
        <fullName evidence="3">Glucan organizing enzyme 1</fullName>
    </recommendedName>
</protein>
<dbReference type="EMBL" id="CP003825">
    <property type="protein sequence ID" value="AFR95621.2"/>
    <property type="molecule type" value="Genomic_DNA"/>
</dbReference>
<dbReference type="RefSeq" id="XP_012049814.1">
    <property type="nucleotide sequence ID" value="XM_012194424.1"/>
</dbReference>
<dbReference type="SMR" id="J9VQC4"/>
<dbReference type="GeneID" id="23885854"/>
<dbReference type="KEGG" id="cng:CNAG_02199"/>
<dbReference type="VEuPathDB" id="FungiDB:CNAG_02199"/>
<dbReference type="HOGENOM" id="CLU_050874_0_0_1"/>
<dbReference type="OrthoDB" id="5588at5206"/>
<dbReference type="Proteomes" id="UP000010091">
    <property type="component" value="Chromosome 6"/>
</dbReference>
<dbReference type="GO" id="GO:0005886">
    <property type="term" value="C:plasma membrane"/>
    <property type="evidence" value="ECO:0000314"/>
    <property type="project" value="UniProtKB"/>
</dbReference>
<dbReference type="GO" id="GO:0031505">
    <property type="term" value="P:fungal-type cell wall organization"/>
    <property type="evidence" value="ECO:0000315"/>
    <property type="project" value="UniProtKB"/>
</dbReference>
<dbReference type="GO" id="GO:0005978">
    <property type="term" value="P:glycogen biosynthetic process"/>
    <property type="evidence" value="ECO:0000315"/>
    <property type="project" value="UniProtKB"/>
</dbReference>
<dbReference type="Gene3D" id="3.90.550.20">
    <property type="match status" value="1"/>
</dbReference>
<dbReference type="InterPro" id="IPR007577">
    <property type="entry name" value="GlycoTrfase_DXD_sugar-bd_CS"/>
</dbReference>
<dbReference type="InterPro" id="IPR029044">
    <property type="entry name" value="Nucleotide-diphossugar_trans"/>
</dbReference>
<dbReference type="PANTHER" id="PTHR46830:SF2">
    <property type="entry name" value="ALPHA-1,4-N-ACETYLGLUCOSAMINYLTRANSFERASE"/>
    <property type="match status" value="1"/>
</dbReference>
<dbReference type="PANTHER" id="PTHR46830">
    <property type="entry name" value="TRANSFERASE, PUTATIVE-RELATED"/>
    <property type="match status" value="1"/>
</dbReference>
<dbReference type="Pfam" id="PF04488">
    <property type="entry name" value="Gly_transf_sug"/>
    <property type="match status" value="1"/>
</dbReference>
<dbReference type="SUPFAM" id="SSF53448">
    <property type="entry name" value="Nucleotide-diphospho-sugar transferases"/>
    <property type="match status" value="1"/>
</dbReference>
<name>GOE1_CRYNH</name>
<organism evidence="7">
    <name type="scientific">Cryptococcus neoformans var. grubii serotype A (strain H99 / ATCC 208821 / CBS 10515 / FGSC 9487)</name>
    <name type="common">Filobasidiella neoformans var. grubii</name>
    <dbReference type="NCBI Taxonomy" id="235443"/>
    <lineage>
        <taxon>Eukaryota</taxon>
        <taxon>Fungi</taxon>
        <taxon>Dikarya</taxon>
        <taxon>Basidiomycota</taxon>
        <taxon>Agaricomycotina</taxon>
        <taxon>Tremellomycetes</taxon>
        <taxon>Tremellales</taxon>
        <taxon>Cryptococcaceae</taxon>
        <taxon>Cryptococcus</taxon>
        <taxon>Cryptococcus neoformans species complex</taxon>
    </lineage>
</organism>
<reference evidence="7" key="1">
    <citation type="journal article" date="2014" name="PLoS Genet.">
        <title>Analysis of the genome and transcriptome of Cryptococcus neoformans var. grubii reveals complex RNA expression and microevolution leading to virulence attenuation.</title>
        <authorList>
            <person name="Janbon G."/>
            <person name="Ormerod K.L."/>
            <person name="Paulet D."/>
            <person name="Byrnes E.J. III"/>
            <person name="Yadav V."/>
            <person name="Chatterjee G."/>
            <person name="Mullapudi N."/>
            <person name="Hon C.-C."/>
            <person name="Billmyre R.B."/>
            <person name="Brunel F."/>
            <person name="Bahn Y.-S."/>
            <person name="Chen W."/>
            <person name="Chen Y."/>
            <person name="Chow E.W.L."/>
            <person name="Coppee J.-Y."/>
            <person name="Floyd-Averette A."/>
            <person name="Gaillardin C."/>
            <person name="Gerik K.J."/>
            <person name="Goldberg J."/>
            <person name="Gonzalez-Hilarion S."/>
            <person name="Gujja S."/>
            <person name="Hamlin J.L."/>
            <person name="Hsueh Y.-P."/>
            <person name="Ianiri G."/>
            <person name="Jones S."/>
            <person name="Kodira C.D."/>
            <person name="Kozubowski L."/>
            <person name="Lam W."/>
            <person name="Marra M."/>
            <person name="Mesner L.D."/>
            <person name="Mieczkowski P.A."/>
            <person name="Moyrand F."/>
            <person name="Nielsen K."/>
            <person name="Proux C."/>
            <person name="Rossignol T."/>
            <person name="Schein J.E."/>
            <person name="Sun S."/>
            <person name="Wollschlaeger C."/>
            <person name="Wood I.A."/>
            <person name="Zeng Q."/>
            <person name="Neuveglise C."/>
            <person name="Newlon C.S."/>
            <person name="Perfect J.R."/>
            <person name="Lodge J.K."/>
            <person name="Idnurm A."/>
            <person name="Stajich J.E."/>
            <person name="Kronstad J.W."/>
            <person name="Sanyal K."/>
            <person name="Heitman J."/>
            <person name="Fraser J.A."/>
            <person name="Cuomo C.A."/>
            <person name="Dietrich F.S."/>
        </authorList>
    </citation>
    <scope>NUCLEOTIDE SEQUENCE [LARGE SCALE GENOMIC DNA]</scope>
    <source>
        <strain>H99 / ATCC 208821 / CBS 10515 / FGSC 9487</strain>
    </source>
</reference>
<reference evidence="4" key="2">
    <citation type="journal article" date="2024" name="Proc. Natl. Acad. Sci. U.S.A.">
        <title>A fungal protein organizes both glycogen and cell wall glucans.</title>
        <authorList>
            <person name="Loza L."/>
            <person name="Doering T.L."/>
        </authorList>
    </citation>
    <scope>FUNCTION</scope>
    <scope>SUBCELLULAR LOCATION</scope>
    <scope>DISRUPTION PHENOTYPE</scope>
    <scope>TOPOLOGY</scope>
    <source>
        <strain evidence="3">KN99</strain>
    </source>
</reference>
<proteinExistence type="evidence at protein level"/>
<comment type="function">
    <text evidence="2">Plays a role in the localization of glycogen rosettes to the plasma membrane (PubMed:38743622). Required for correct cell wall organization and may facilitate the connection between beta-1,3-glucan and beta-1,6-glucan in the cell wall (PubMed:38743622).</text>
</comment>
<comment type="subcellular location">
    <subcellularLocation>
        <location evidence="2">Cell membrane</location>
        <topology evidence="1">Single-pass membrane protein</topology>
    </subcellularLocation>
</comment>
<comment type="disruption phenotype">
    <text evidence="2">Leads to an absence of beta-1,3-glucan and a strong decrease in alpha-1,4-glucan from the cell wall, a decrease in intracellular glycogen at 37 degrees Celsius, cell wall organization defects, and scattering of glycogen rosettes throughout the cytosol (PubMed:38743622). Decreases survival in macrophage-like cells and leads to a decreased fungal burden in the mouse lung following intranasal inoculation (PubMed:38743622). Simultaneous knockout of GLG1 exacerbates the glycogen synthesis and virulence defect (PubMed:38743622).</text>
</comment>
<comment type="similarity">
    <text evidence="4">Belongs to the glycosyltransferase 32 family.</text>
</comment>